<proteinExistence type="inferred from homology"/>
<name>RPOZ_FRAT1</name>
<organism>
    <name type="scientific">Francisella tularensis subsp. tularensis (strain FSC 198)</name>
    <dbReference type="NCBI Taxonomy" id="393115"/>
    <lineage>
        <taxon>Bacteria</taxon>
        <taxon>Pseudomonadati</taxon>
        <taxon>Pseudomonadota</taxon>
        <taxon>Gammaproteobacteria</taxon>
        <taxon>Thiotrichales</taxon>
        <taxon>Francisellaceae</taxon>
        <taxon>Francisella</taxon>
    </lineage>
</organism>
<feature type="chain" id="PRO_1000005928" description="DNA-directed RNA polymerase subunit omega">
    <location>
        <begin position="1"/>
        <end position="72"/>
    </location>
</feature>
<keyword id="KW-0240">DNA-directed RNA polymerase</keyword>
<keyword id="KW-0548">Nucleotidyltransferase</keyword>
<keyword id="KW-0804">Transcription</keyword>
<keyword id="KW-0808">Transferase</keyword>
<gene>
    <name evidence="1" type="primary">rpoZ</name>
    <name type="ordered locus">FTF0703</name>
</gene>
<reference key="1">
    <citation type="journal article" date="2007" name="PLoS ONE">
        <title>Genome sequencing shows that European isolates of Francisella tularensis subspecies tularensis are almost identical to US laboratory strain Schu S4.</title>
        <authorList>
            <person name="Chaudhuri R.R."/>
            <person name="Ren C.-P."/>
            <person name="Desmond L."/>
            <person name="Vincent G.A."/>
            <person name="Silman N.J."/>
            <person name="Brehm J.K."/>
            <person name="Elmore M.J."/>
            <person name="Hudson M.J."/>
            <person name="Forsman M."/>
            <person name="Isherwood K.E."/>
            <person name="Gurycova D."/>
            <person name="Minton N.P."/>
            <person name="Titball R.W."/>
            <person name="Pallen M.J."/>
            <person name="Vipond R."/>
        </authorList>
    </citation>
    <scope>NUCLEOTIDE SEQUENCE [LARGE SCALE GENOMIC DNA]</scope>
    <source>
        <strain>FSC 198</strain>
    </source>
</reference>
<protein>
    <recommendedName>
        <fullName evidence="1">DNA-directed RNA polymerase subunit omega</fullName>
        <shortName evidence="1">RNAP omega subunit</shortName>
        <ecNumber evidence="1">2.7.7.6</ecNumber>
    </recommendedName>
    <alternativeName>
        <fullName evidence="1">RNA polymerase omega subunit</fullName>
    </alternativeName>
    <alternativeName>
        <fullName evidence="1">Transcriptase subunit omega</fullName>
    </alternativeName>
</protein>
<comment type="function">
    <text evidence="1">Promotes RNA polymerase assembly. Latches the N- and C-terminal regions of the beta' subunit thereby facilitating its interaction with the beta and alpha subunits.</text>
</comment>
<comment type="catalytic activity">
    <reaction evidence="1">
        <text>RNA(n) + a ribonucleoside 5'-triphosphate = RNA(n+1) + diphosphate</text>
        <dbReference type="Rhea" id="RHEA:21248"/>
        <dbReference type="Rhea" id="RHEA-COMP:14527"/>
        <dbReference type="Rhea" id="RHEA-COMP:17342"/>
        <dbReference type="ChEBI" id="CHEBI:33019"/>
        <dbReference type="ChEBI" id="CHEBI:61557"/>
        <dbReference type="ChEBI" id="CHEBI:140395"/>
        <dbReference type="EC" id="2.7.7.6"/>
    </reaction>
</comment>
<comment type="subunit">
    <text evidence="1">The RNAP catalytic core consists of 2 alpha, 1 beta, 1 beta' and 1 omega subunit. When a sigma factor is associated with the core the holoenzyme is formed, which can initiate transcription.</text>
</comment>
<comment type="similarity">
    <text evidence="1">Belongs to the RNA polymerase subunit omega family.</text>
</comment>
<evidence type="ECO:0000255" key="1">
    <source>
        <dbReference type="HAMAP-Rule" id="MF_00366"/>
    </source>
</evidence>
<dbReference type="EC" id="2.7.7.6" evidence="1"/>
<dbReference type="EMBL" id="AM286280">
    <property type="protein sequence ID" value="CAL08719.1"/>
    <property type="molecule type" value="Genomic_DNA"/>
</dbReference>
<dbReference type="RefSeq" id="WP_003019409.1">
    <property type="nucleotide sequence ID" value="NC_008245.1"/>
</dbReference>
<dbReference type="SMR" id="Q14IC5"/>
<dbReference type="KEGG" id="ftf:FTF0703"/>
<dbReference type="HOGENOM" id="CLU_125406_5_1_6"/>
<dbReference type="GO" id="GO:0000428">
    <property type="term" value="C:DNA-directed RNA polymerase complex"/>
    <property type="evidence" value="ECO:0007669"/>
    <property type="project" value="UniProtKB-KW"/>
</dbReference>
<dbReference type="GO" id="GO:0003677">
    <property type="term" value="F:DNA binding"/>
    <property type="evidence" value="ECO:0007669"/>
    <property type="project" value="UniProtKB-UniRule"/>
</dbReference>
<dbReference type="GO" id="GO:0003899">
    <property type="term" value="F:DNA-directed RNA polymerase activity"/>
    <property type="evidence" value="ECO:0007669"/>
    <property type="project" value="UniProtKB-UniRule"/>
</dbReference>
<dbReference type="GO" id="GO:0006351">
    <property type="term" value="P:DNA-templated transcription"/>
    <property type="evidence" value="ECO:0007669"/>
    <property type="project" value="UniProtKB-UniRule"/>
</dbReference>
<dbReference type="Gene3D" id="3.90.940.10">
    <property type="match status" value="1"/>
</dbReference>
<dbReference type="HAMAP" id="MF_00366">
    <property type="entry name" value="RNApol_bact_RpoZ"/>
    <property type="match status" value="1"/>
</dbReference>
<dbReference type="InterPro" id="IPR003716">
    <property type="entry name" value="DNA-dir_RNA_pol_omega"/>
</dbReference>
<dbReference type="InterPro" id="IPR006110">
    <property type="entry name" value="Pol_omega/Rpo6/RPB6"/>
</dbReference>
<dbReference type="InterPro" id="IPR036161">
    <property type="entry name" value="RPB6/omega-like_sf"/>
</dbReference>
<dbReference type="NCBIfam" id="TIGR00690">
    <property type="entry name" value="rpoZ"/>
    <property type="match status" value="1"/>
</dbReference>
<dbReference type="PANTHER" id="PTHR34476">
    <property type="entry name" value="DNA-DIRECTED RNA POLYMERASE SUBUNIT OMEGA"/>
    <property type="match status" value="1"/>
</dbReference>
<dbReference type="PANTHER" id="PTHR34476:SF1">
    <property type="entry name" value="DNA-DIRECTED RNA POLYMERASE SUBUNIT OMEGA"/>
    <property type="match status" value="1"/>
</dbReference>
<dbReference type="Pfam" id="PF01192">
    <property type="entry name" value="RNA_pol_Rpb6"/>
    <property type="match status" value="1"/>
</dbReference>
<dbReference type="SMART" id="SM01409">
    <property type="entry name" value="RNA_pol_Rpb6"/>
    <property type="match status" value="1"/>
</dbReference>
<dbReference type="SUPFAM" id="SSF63562">
    <property type="entry name" value="RPB6/omega subunit-like"/>
    <property type="match status" value="1"/>
</dbReference>
<sequence length="72" mass="8183">MARVTVEDCLDKVETRFDLVVLASMRANKILKNGYSESMENEKKEKATVVALREIAESEITPEQILRNEIEG</sequence>
<accession>Q14IC5</accession>